<dbReference type="EC" id="2.1.1.-" evidence="3"/>
<dbReference type="EMBL" id="AADS01000380">
    <property type="status" value="NOT_ANNOTATED_CDS"/>
    <property type="molecule type" value="Genomic_DNA"/>
</dbReference>
<dbReference type="SMR" id="P0CT89"/>
<dbReference type="EnsemblFungi" id="AGR57_2642T0">
    <property type="protein sequence ID" value="AGR57_2642T0-p1"/>
    <property type="gene ID" value="AGR57_2642"/>
</dbReference>
<dbReference type="VEuPathDB" id="FungiDB:AGR57_2642"/>
<dbReference type="GO" id="GO:0008171">
    <property type="term" value="F:O-methyltransferase activity"/>
    <property type="evidence" value="ECO:0007669"/>
    <property type="project" value="InterPro"/>
</dbReference>
<dbReference type="GO" id="GO:0046274">
    <property type="term" value="P:lignin catabolic process"/>
    <property type="evidence" value="ECO:0007669"/>
    <property type="project" value="UniProtKB-KW"/>
</dbReference>
<dbReference type="GO" id="GO:0032259">
    <property type="term" value="P:methylation"/>
    <property type="evidence" value="ECO:0007669"/>
    <property type="project" value="UniProtKB-KW"/>
</dbReference>
<dbReference type="GO" id="GO:0044550">
    <property type="term" value="P:secondary metabolite biosynthetic process"/>
    <property type="evidence" value="ECO:0007669"/>
    <property type="project" value="UniProtKB-ARBA"/>
</dbReference>
<dbReference type="Gene3D" id="3.40.50.150">
    <property type="entry name" value="Vaccinia Virus protein VP39"/>
    <property type="match status" value="1"/>
</dbReference>
<dbReference type="Gene3D" id="1.10.10.10">
    <property type="entry name" value="Winged helix-like DNA-binding domain superfamily/Winged helix DNA-binding domain"/>
    <property type="match status" value="1"/>
</dbReference>
<dbReference type="InterPro" id="IPR016461">
    <property type="entry name" value="COMT-like"/>
</dbReference>
<dbReference type="InterPro" id="IPR001077">
    <property type="entry name" value="O_MeTrfase_dom"/>
</dbReference>
<dbReference type="InterPro" id="IPR029063">
    <property type="entry name" value="SAM-dependent_MTases_sf"/>
</dbReference>
<dbReference type="InterPro" id="IPR036388">
    <property type="entry name" value="WH-like_DNA-bd_sf"/>
</dbReference>
<dbReference type="InterPro" id="IPR036390">
    <property type="entry name" value="WH_DNA-bd_sf"/>
</dbReference>
<dbReference type="PANTHER" id="PTHR43712:SF2">
    <property type="entry name" value="O-METHYLTRANSFERASE CICE"/>
    <property type="match status" value="1"/>
</dbReference>
<dbReference type="PANTHER" id="PTHR43712">
    <property type="entry name" value="PUTATIVE (AFU_ORTHOLOGUE AFUA_4G14580)-RELATED"/>
    <property type="match status" value="1"/>
</dbReference>
<dbReference type="Pfam" id="PF00891">
    <property type="entry name" value="Methyltransf_2"/>
    <property type="match status" value="1"/>
</dbReference>
<dbReference type="SUPFAM" id="SSF53335">
    <property type="entry name" value="S-adenosyl-L-methionine-dependent methyltransferases"/>
    <property type="match status" value="1"/>
</dbReference>
<dbReference type="SUPFAM" id="SSF46785">
    <property type="entry name" value="Winged helix' DNA-binding domain"/>
    <property type="match status" value="1"/>
</dbReference>
<dbReference type="PROSITE" id="PS51683">
    <property type="entry name" value="SAM_OMT_II"/>
    <property type="match status" value="1"/>
</dbReference>
<evidence type="ECO:0000250" key="1">
    <source>
        <dbReference type="UniProtKB" id="O04385"/>
    </source>
</evidence>
<evidence type="ECO:0000255" key="2">
    <source>
        <dbReference type="PROSITE-ProRule" id="PRU01020"/>
    </source>
</evidence>
<evidence type="ECO:0000269" key="3">
    <source>
    </source>
</evidence>
<evidence type="ECO:0000303" key="4">
    <source>
    </source>
</evidence>
<evidence type="ECO:0000305" key="5"/>
<comment type="function">
    <text evidence="3">S-adenosyl-L-methionine-dependent methyltransferase that preferentially catalyzes the methylation of 4-OH phenolic compounds like coniferyl alcohol, vanillyl alcohol and ferrulic acid. May play a role in promoting lignin degradation by methylating and inactivating free-hydroxyl phenolic compounds, products of lignin cleavage which are known inhibitors of lignin peroxidases.</text>
</comment>
<comment type="biophysicochemical properties">
    <phDependence>
        <text evidence="3">Optimum pH is 7.5.</text>
    </phDependence>
</comment>
<comment type="similarity">
    <text evidence="5">Belongs to the class I-like SAM-binding methyltransferase superfamily. Cation-independent O-methyltransferase family. COMT subfamily.</text>
</comment>
<organism>
    <name type="scientific">Phanerochaete chrysosporium (strain RP-78 / ATCC MYA-4764 / FGSC 9002)</name>
    <name type="common">White-rot fungus</name>
    <name type="synonym">Sporotrichum pruinosum</name>
    <dbReference type="NCBI Taxonomy" id="273507"/>
    <lineage>
        <taxon>Eukaryota</taxon>
        <taxon>Fungi</taxon>
        <taxon>Dikarya</taxon>
        <taxon>Basidiomycota</taxon>
        <taxon>Agaricomycotina</taxon>
        <taxon>Agaricomycetes</taxon>
        <taxon>Polyporales</taxon>
        <taxon>Phanerochaetaceae</taxon>
        <taxon>Phanerodontia</taxon>
        <taxon>Phanerodontia chrysosporium</taxon>
    </lineage>
</organism>
<keyword id="KW-0439">Lignin degradation</keyword>
<keyword id="KW-0489">Methyltransferase</keyword>
<keyword id="KW-0949">S-adenosyl-L-methionine</keyword>
<keyword id="KW-0808">Transferase</keyword>
<reference key="1">
    <citation type="journal article" date="2004" name="Nat. Biotechnol.">
        <title>Genome sequence of the lignocellulose degrading fungus Phanerochaete chrysosporium strain RP78.</title>
        <authorList>
            <person name="Martinez D."/>
            <person name="Larrondo L.F."/>
            <person name="Putnam N."/>
            <person name="Gelpke M.D.S."/>
            <person name="Huang K."/>
            <person name="Chapman J."/>
            <person name="Helfenbein K.G."/>
            <person name="Ramaiya P."/>
            <person name="Detter J.C."/>
            <person name="Larimer F."/>
            <person name="Coutinho P.M."/>
            <person name="Henrissat B."/>
            <person name="Berka R."/>
            <person name="Cullen D."/>
            <person name="Rokhsar D."/>
        </authorList>
    </citation>
    <scope>NUCLEOTIDE SEQUENCE [LARGE SCALE GENOMIC DNA]</scope>
    <source>
        <strain>RP-78 / ATCC MYA-4764 / FGSC 9002</strain>
    </source>
</reference>
<reference key="2">
    <citation type="journal article" date="2006" name="Fungal Genet. Biol.">
        <title>Computational analysis of the Phanerochaete chrysosporium v2.0 genome database and mass spectrometry identification of peptides in ligninolytic cultures reveal complex mixtures of secreted proteins.</title>
        <authorList>
            <person name="Vanden Wymelenberg A."/>
            <person name="Minges P."/>
            <person name="Sabat G."/>
            <person name="Martinez D."/>
            <person name="Aerts A."/>
            <person name="Salamov A."/>
            <person name="Grigoriev I."/>
            <person name="Shapiro H."/>
            <person name="Putnam N."/>
            <person name="Belinky P."/>
            <person name="Dosoretz C."/>
            <person name="Gaskell J."/>
            <person name="Kersten P."/>
            <person name="Cullen D."/>
        </authorList>
    </citation>
    <scope>GENOME REANNOTATION</scope>
    <source>
        <strain>RP-78 / ATCC MYA-4764 / FGSC 9002</strain>
    </source>
</reference>
<reference key="3">
    <citation type="journal article" date="2014" name="Fungal Genet. Biol.">
        <title>Genomics of wood-degrading fungi.</title>
        <authorList>
            <person name="Ohm R.A."/>
            <person name="Riley R."/>
            <person name="Salamov A."/>
            <person name="Min B."/>
            <person name="Choi I.-G."/>
            <person name="Grigoriev I.V."/>
        </authorList>
    </citation>
    <scope>GENOME REANNOTATION</scope>
    <source>
        <strain>RP-78 / ATCC MYA-4764 / FGSC 9002</strain>
    </source>
</reference>
<reference key="4">
    <citation type="journal article" date="2016" name="Enzyme Microb. Technol.">
        <title>Discovery and characterization of new O-methyltransferase from the genome of the lignin-degrading fungus Phanerochaete chrysosporium for enhanced lignin degradation.</title>
        <authorList>
            <person name="Pham L.T.M."/>
            <person name="Kim Y.H."/>
        </authorList>
    </citation>
    <scope>FUNCTION</scope>
    <scope>CATALYTIC ACTIVITY</scope>
    <scope>BIOPHYSICOCHEMICAL PROPERTIES</scope>
</reference>
<sequence>MPSPLRQLLELMIQAVETLESVCEEKGISLPDLHAPYTPASEAFLRIPAAIEAANVITAAADHMSAIVSPPTSYLYKFLGGPCRAVAIRACLESNVSEIIREAGPSGIHVDDIAKKNGHDAQKLARFLRYLATHHIYREVSPDVFTHSRLSCFFDTYKPSAEVIANPKQKYDNTRGFAAPASHHLDITFKAAALAWETMDDPKTGHSDELTDAPFARAFPEDKTLWNLLERDAFARNRFDLTMVAVAQRQSPDSIFRAFDWERLPAGALVVEVGGGMGTSAFPLATKYPEMRLVVQDLPDVIAKAEKLWTEKMPDALSSGRVVLQGHDCFAPQPQTDAAVFLLKMILHDWSDEYCVKILRQLRAAARPDTALVIVDCLVPLACRLDDAAEAALPGAVGPQAPPPLLPNYGTVNEYVYNMDVMMHLLFNAQERTVAQFTRVLLRAGWRVCAVHRTQEGNGVFLQSVEAVPA</sequence>
<protein>
    <recommendedName>
        <fullName evidence="4">4-O-methyltransferase 1</fullName>
        <shortName evidence="4">Mtrase 1</shortName>
        <ecNumber evidence="3">2.1.1.-</ecNumber>
    </recommendedName>
</protein>
<name>OMT1_PHACR</name>
<gene>
    <name type="ORF">fgenesh1_kg.2_#_1379_#_Locus12621v1rpkm4.09</name>
</gene>
<feature type="chain" id="PRO_0000435966" description="4-O-methyltransferase 1">
    <location>
        <begin position="1"/>
        <end position="470"/>
    </location>
</feature>
<feature type="active site" description="Proton acceptor" evidence="2">
    <location>
        <position position="348"/>
    </location>
</feature>
<feature type="binding site" evidence="1">
    <location>
        <begin position="274"/>
        <end position="275"/>
    </location>
    <ligand>
        <name>S-adenosyl-L-methionine</name>
        <dbReference type="ChEBI" id="CHEBI:59789"/>
    </ligand>
</feature>
<feature type="binding site" evidence="1">
    <location>
        <position position="297"/>
    </location>
    <ligand>
        <name>S-adenosyl-L-methionine</name>
        <dbReference type="ChEBI" id="CHEBI:59789"/>
    </ligand>
</feature>
<feature type="binding site" evidence="1">
    <location>
        <begin position="328"/>
        <end position="329"/>
    </location>
    <ligand>
        <name>S-adenosyl-L-methionine</name>
        <dbReference type="ChEBI" id="CHEBI:59789"/>
    </ligand>
</feature>
<feature type="binding site" evidence="1">
    <location>
        <position position="344"/>
    </location>
    <ligand>
        <name>S-adenosyl-L-methionine</name>
        <dbReference type="ChEBI" id="CHEBI:59789"/>
    </ligand>
</feature>
<proteinExistence type="evidence at protein level"/>
<accession>P0CT89</accession>